<evidence type="ECO:0000250" key="1"/>
<evidence type="ECO:0000305" key="2"/>
<feature type="chain" id="PRO_0000405774" description="Putative 4-hydroxy-2-oxoglutarate aldolase, mitochondrial">
    <location>
        <begin position="1"/>
        <end position="314"/>
    </location>
</feature>
<feature type="active site" description="Schiff-base intermediate with substrate" evidence="1">
    <location>
        <position position="171"/>
    </location>
</feature>
<feature type="binding site" evidence="1">
    <location>
        <begin position="50"/>
        <end position="51"/>
    </location>
    <ligand>
        <name>substrate</name>
    </ligand>
</feature>
<feature type="site" description="Involved in proton transfer during cleavage" evidence="1">
    <location>
        <position position="141"/>
    </location>
</feature>
<name>HOGA1_COCIM</name>
<dbReference type="EC" id="4.1.3.16"/>
<dbReference type="EMBL" id="GG704911">
    <property type="protein sequence ID" value="EAS34797.3"/>
    <property type="molecule type" value="Genomic_DNA"/>
</dbReference>
<dbReference type="RefSeq" id="XP_001246380.1">
    <property type="nucleotide sequence ID" value="XM_001246379.2"/>
</dbReference>
<dbReference type="SMR" id="P0CL20"/>
<dbReference type="STRING" id="246410.P0CL20"/>
<dbReference type="GeneID" id="4566390"/>
<dbReference type="KEGG" id="cim:CIMG_00151"/>
<dbReference type="VEuPathDB" id="FungiDB:CIMG_00151"/>
<dbReference type="InParanoid" id="P0CL20"/>
<dbReference type="OMA" id="KHAVACY"/>
<dbReference type="OrthoDB" id="191315at2759"/>
<dbReference type="Proteomes" id="UP000001261">
    <property type="component" value="Unassembled WGS sequence"/>
</dbReference>
<dbReference type="GO" id="GO:0106009">
    <property type="term" value="F:(4S)-4-hydroxy-2-oxoglutarate aldolase activity"/>
    <property type="evidence" value="ECO:0007669"/>
    <property type="project" value="RHEA"/>
</dbReference>
<dbReference type="GO" id="GO:0008700">
    <property type="term" value="F:(R,S)-4-hydroxy-2-oxoglutarate aldolase activity"/>
    <property type="evidence" value="ECO:0007669"/>
    <property type="project" value="UniProtKB-EC"/>
</dbReference>
<dbReference type="GO" id="GO:0008840">
    <property type="term" value="F:4-hydroxy-tetrahydrodipicolinate synthase activity"/>
    <property type="evidence" value="ECO:0007669"/>
    <property type="project" value="TreeGrafter"/>
</dbReference>
<dbReference type="CDD" id="cd00408">
    <property type="entry name" value="DHDPS-like"/>
    <property type="match status" value="1"/>
</dbReference>
<dbReference type="Gene3D" id="3.20.20.70">
    <property type="entry name" value="Aldolase class I"/>
    <property type="match status" value="1"/>
</dbReference>
<dbReference type="InterPro" id="IPR013785">
    <property type="entry name" value="Aldolase_TIM"/>
</dbReference>
<dbReference type="InterPro" id="IPR002220">
    <property type="entry name" value="DapA-like"/>
</dbReference>
<dbReference type="PANTHER" id="PTHR12128">
    <property type="entry name" value="DIHYDRODIPICOLINATE SYNTHASE"/>
    <property type="match status" value="1"/>
</dbReference>
<dbReference type="PANTHER" id="PTHR12128:SF47">
    <property type="entry name" value="DIHYDRODIPICOLINATE SYNTHASE-RELATED"/>
    <property type="match status" value="1"/>
</dbReference>
<dbReference type="Pfam" id="PF00701">
    <property type="entry name" value="DHDPS"/>
    <property type="match status" value="1"/>
</dbReference>
<dbReference type="PIRSF" id="PIRSF001365">
    <property type="entry name" value="DHDPS"/>
    <property type="match status" value="1"/>
</dbReference>
<dbReference type="PRINTS" id="PR00146">
    <property type="entry name" value="DHPICSNTHASE"/>
</dbReference>
<dbReference type="SMART" id="SM01130">
    <property type="entry name" value="DHDPS"/>
    <property type="match status" value="1"/>
</dbReference>
<dbReference type="SUPFAM" id="SSF51569">
    <property type="entry name" value="Aldolase"/>
    <property type="match status" value="1"/>
</dbReference>
<protein>
    <recommendedName>
        <fullName>Putative 4-hydroxy-2-oxoglutarate aldolase, mitochondrial</fullName>
        <ecNumber>4.1.3.16</ecNumber>
    </recommendedName>
    <alternativeName>
        <fullName>Dihydrodipicolinate synthase-like</fullName>
        <shortName>DHDPS-like protein</shortName>
    </alternativeName>
</protein>
<sequence length="314" mass="33243">MVPRVPQPGIWCPAVTFFDSKTDTLDLASQERYYAYLARSGLTGLVILGTNAEAFLLTREERAQLIATARKAVGPDFPIMAGVGAHSTRQVLEHINDASVAGANYVLVLPPAYFGKATTPPVIKSFFDDVSCQSPLPVVIYNFPGVCNGIDLDSDMITTIARKNPNVVGVKLTCASVGKITRLAATLPPAAFSVFGGQSDFLIGGLSVGSAGCIAAFANVFPKTVSKIYELYKAGKVDQAMELHRKAALAESPCKSGIATTKYAAAIFSAKAAGIEDAEEKLRPRKPYDPPSEAAKQEVRKVMAEVAAIEAGLS</sequence>
<gene>
    <name type="ORF">CIMG_00151</name>
</gene>
<proteinExistence type="inferred from homology"/>
<keyword id="KW-0456">Lyase</keyword>
<keyword id="KW-1185">Reference proteome</keyword>
<keyword id="KW-0704">Schiff base</keyword>
<comment type="function">
    <text evidence="1">May catalyze the final step in the metabolic pathway of hydroxyproline.</text>
</comment>
<comment type="catalytic activity">
    <reaction>
        <text>(4S)-4-hydroxy-2-oxoglutarate = glyoxylate + pyruvate</text>
        <dbReference type="Rhea" id="RHEA:35639"/>
        <dbReference type="ChEBI" id="CHEBI:15361"/>
        <dbReference type="ChEBI" id="CHEBI:36655"/>
        <dbReference type="ChEBI" id="CHEBI:71685"/>
        <dbReference type="EC" id="4.1.3.16"/>
    </reaction>
</comment>
<comment type="catalytic activity">
    <reaction>
        <text>(4R)-4-hydroxy-2-oxoglutarate = glyoxylate + pyruvate</text>
        <dbReference type="Rhea" id="RHEA:30687"/>
        <dbReference type="ChEBI" id="CHEBI:15361"/>
        <dbReference type="ChEBI" id="CHEBI:36655"/>
        <dbReference type="ChEBI" id="CHEBI:62213"/>
        <dbReference type="EC" id="4.1.3.16"/>
    </reaction>
</comment>
<comment type="similarity">
    <text evidence="2">Belongs to the DapA family.</text>
</comment>
<organism>
    <name type="scientific">Coccidioides immitis (strain RS)</name>
    <name type="common">Valley fever fungus</name>
    <dbReference type="NCBI Taxonomy" id="246410"/>
    <lineage>
        <taxon>Eukaryota</taxon>
        <taxon>Fungi</taxon>
        <taxon>Dikarya</taxon>
        <taxon>Ascomycota</taxon>
        <taxon>Pezizomycotina</taxon>
        <taxon>Eurotiomycetes</taxon>
        <taxon>Eurotiomycetidae</taxon>
        <taxon>Onygenales</taxon>
        <taxon>Onygenaceae</taxon>
        <taxon>Coccidioides</taxon>
    </lineage>
</organism>
<accession>P0CL20</accession>
<accession>J3KGB9</accession>
<accession>J3KGD9</accession>
<reference key="1">
    <citation type="journal article" date="2009" name="Genome Res.">
        <title>Comparative genomic analyses of the human fungal pathogens Coccidioides and their relatives.</title>
        <authorList>
            <person name="Sharpton T.J."/>
            <person name="Stajich J.E."/>
            <person name="Rounsley S.D."/>
            <person name="Gardner M.J."/>
            <person name="Wortman J.R."/>
            <person name="Jordar V.S."/>
            <person name="Maiti R."/>
            <person name="Kodira C.D."/>
            <person name="Neafsey D.E."/>
            <person name="Zeng Q."/>
            <person name="Hung C.-Y."/>
            <person name="McMahan C."/>
            <person name="Muszewska A."/>
            <person name="Grynberg M."/>
            <person name="Mandel M.A."/>
            <person name="Kellner E.M."/>
            <person name="Barker B.M."/>
            <person name="Galgiani J.N."/>
            <person name="Orbach M.J."/>
            <person name="Kirkland T.N."/>
            <person name="Cole G.T."/>
            <person name="Henn M.R."/>
            <person name="Birren B.W."/>
            <person name="Taylor J.W."/>
        </authorList>
    </citation>
    <scope>NUCLEOTIDE SEQUENCE [LARGE SCALE GENOMIC DNA]</scope>
    <source>
        <strain>RS</strain>
    </source>
</reference>
<reference key="2">
    <citation type="journal article" date="2010" name="Genome Res.">
        <title>Population genomic sequencing of Coccidioides fungi reveals recent hybridization and transposon control.</title>
        <authorList>
            <person name="Neafsey D.E."/>
            <person name="Barker B.M."/>
            <person name="Sharpton T.J."/>
            <person name="Stajich J.E."/>
            <person name="Park D.J."/>
            <person name="Whiston E."/>
            <person name="Hung C.-Y."/>
            <person name="McMahan C."/>
            <person name="White J."/>
            <person name="Sykes S."/>
            <person name="Heiman D."/>
            <person name="Young S."/>
            <person name="Zeng Q."/>
            <person name="Abouelleil A."/>
            <person name="Aftuck L."/>
            <person name="Bessette D."/>
            <person name="Brown A."/>
            <person name="FitzGerald M."/>
            <person name="Lui A."/>
            <person name="Macdonald J.P."/>
            <person name="Priest M."/>
            <person name="Orbach M.J."/>
            <person name="Galgiani J.N."/>
            <person name="Kirkland T.N."/>
            <person name="Cole G.T."/>
            <person name="Birren B.W."/>
            <person name="Henn M.R."/>
            <person name="Taylor J.W."/>
            <person name="Rounsley S.D."/>
        </authorList>
    </citation>
    <scope>GENOME REANNOTATION</scope>
    <source>
        <strain>RS</strain>
    </source>
</reference>